<name>THIC_GLUOX</name>
<accession>Q5FNT7</accession>
<proteinExistence type="inferred from homology"/>
<keyword id="KW-0004">4Fe-4S</keyword>
<keyword id="KW-0408">Iron</keyword>
<keyword id="KW-0411">Iron-sulfur</keyword>
<keyword id="KW-0456">Lyase</keyword>
<keyword id="KW-0479">Metal-binding</keyword>
<keyword id="KW-1185">Reference proteome</keyword>
<keyword id="KW-0949">S-adenosyl-L-methionine</keyword>
<keyword id="KW-0784">Thiamine biosynthesis</keyword>
<keyword id="KW-0862">Zinc</keyword>
<comment type="function">
    <text evidence="1">Catalyzes the synthesis of the hydroxymethylpyrimidine phosphate (HMP-P) moiety of thiamine from aminoimidazole ribotide (AIR) in a radical S-adenosyl-L-methionine (SAM)-dependent reaction.</text>
</comment>
<comment type="catalytic activity">
    <reaction evidence="1">
        <text>5-amino-1-(5-phospho-beta-D-ribosyl)imidazole + S-adenosyl-L-methionine = 4-amino-2-methyl-5-(phosphooxymethyl)pyrimidine + CO + 5'-deoxyadenosine + formate + L-methionine + 3 H(+)</text>
        <dbReference type="Rhea" id="RHEA:24840"/>
        <dbReference type="ChEBI" id="CHEBI:15378"/>
        <dbReference type="ChEBI" id="CHEBI:15740"/>
        <dbReference type="ChEBI" id="CHEBI:17245"/>
        <dbReference type="ChEBI" id="CHEBI:17319"/>
        <dbReference type="ChEBI" id="CHEBI:57844"/>
        <dbReference type="ChEBI" id="CHEBI:58354"/>
        <dbReference type="ChEBI" id="CHEBI:59789"/>
        <dbReference type="ChEBI" id="CHEBI:137981"/>
        <dbReference type="EC" id="4.1.99.17"/>
    </reaction>
</comment>
<comment type="cofactor">
    <cofactor evidence="1">
        <name>[4Fe-4S] cluster</name>
        <dbReference type="ChEBI" id="CHEBI:49883"/>
    </cofactor>
    <text evidence="1">Binds 1 [4Fe-4S] cluster per subunit. The cluster is coordinated with 3 cysteines and an exchangeable S-adenosyl-L-methionine.</text>
</comment>
<comment type="pathway">
    <text evidence="1">Cofactor biosynthesis; thiamine diphosphate biosynthesis.</text>
</comment>
<comment type="subunit">
    <text evidence="1">Homodimer.</text>
</comment>
<comment type="similarity">
    <text evidence="1">Belongs to the ThiC family.</text>
</comment>
<organism>
    <name type="scientific">Gluconobacter oxydans (strain 621H)</name>
    <name type="common">Gluconobacter suboxydans</name>
    <dbReference type="NCBI Taxonomy" id="290633"/>
    <lineage>
        <taxon>Bacteria</taxon>
        <taxon>Pseudomonadati</taxon>
        <taxon>Pseudomonadota</taxon>
        <taxon>Alphaproteobacteria</taxon>
        <taxon>Acetobacterales</taxon>
        <taxon>Acetobacteraceae</taxon>
        <taxon>Gluconobacter</taxon>
    </lineage>
</organism>
<protein>
    <recommendedName>
        <fullName evidence="1">Phosphomethylpyrimidine synthase</fullName>
        <ecNumber evidence="1">4.1.99.17</ecNumber>
    </recommendedName>
    <alternativeName>
        <fullName evidence="1">Hydroxymethylpyrimidine phosphate synthase</fullName>
        <shortName evidence="1">HMP-P synthase</shortName>
        <shortName evidence="1">HMP-phosphate synthase</shortName>
        <shortName evidence="1">HMPP synthase</shortName>
    </alternativeName>
    <alternativeName>
        <fullName evidence="1">Thiamine biosynthesis protein ThiC</fullName>
    </alternativeName>
</protein>
<dbReference type="EC" id="4.1.99.17" evidence="1"/>
<dbReference type="EMBL" id="CP000009">
    <property type="protein sequence ID" value="AAW61960.1"/>
    <property type="molecule type" value="Genomic_DNA"/>
</dbReference>
<dbReference type="RefSeq" id="WP_011253730.1">
    <property type="nucleotide sequence ID" value="NC_006677.1"/>
</dbReference>
<dbReference type="SMR" id="Q5FNT7"/>
<dbReference type="STRING" id="290633.GOX2225"/>
<dbReference type="KEGG" id="gox:GOX2225"/>
<dbReference type="eggNOG" id="COG0422">
    <property type="taxonomic scope" value="Bacteria"/>
</dbReference>
<dbReference type="HOGENOM" id="CLU_013181_2_1_5"/>
<dbReference type="UniPathway" id="UPA00060"/>
<dbReference type="Proteomes" id="UP000006375">
    <property type="component" value="Chromosome"/>
</dbReference>
<dbReference type="GO" id="GO:0005829">
    <property type="term" value="C:cytosol"/>
    <property type="evidence" value="ECO:0007669"/>
    <property type="project" value="TreeGrafter"/>
</dbReference>
<dbReference type="GO" id="GO:0051539">
    <property type="term" value="F:4 iron, 4 sulfur cluster binding"/>
    <property type="evidence" value="ECO:0007669"/>
    <property type="project" value="UniProtKB-KW"/>
</dbReference>
<dbReference type="GO" id="GO:0016830">
    <property type="term" value="F:carbon-carbon lyase activity"/>
    <property type="evidence" value="ECO:0007669"/>
    <property type="project" value="InterPro"/>
</dbReference>
<dbReference type="GO" id="GO:0008270">
    <property type="term" value="F:zinc ion binding"/>
    <property type="evidence" value="ECO:0007669"/>
    <property type="project" value="UniProtKB-UniRule"/>
</dbReference>
<dbReference type="GO" id="GO:0009228">
    <property type="term" value="P:thiamine biosynthetic process"/>
    <property type="evidence" value="ECO:0007669"/>
    <property type="project" value="UniProtKB-KW"/>
</dbReference>
<dbReference type="GO" id="GO:0009229">
    <property type="term" value="P:thiamine diphosphate biosynthetic process"/>
    <property type="evidence" value="ECO:0007669"/>
    <property type="project" value="UniProtKB-UniRule"/>
</dbReference>
<dbReference type="FunFam" id="3.20.20.540:FF:000001">
    <property type="entry name" value="Phosphomethylpyrimidine synthase"/>
    <property type="match status" value="1"/>
</dbReference>
<dbReference type="Gene3D" id="6.10.250.620">
    <property type="match status" value="1"/>
</dbReference>
<dbReference type="Gene3D" id="3.20.20.540">
    <property type="entry name" value="Radical SAM ThiC family, central domain"/>
    <property type="match status" value="1"/>
</dbReference>
<dbReference type="HAMAP" id="MF_00089">
    <property type="entry name" value="ThiC"/>
    <property type="match status" value="1"/>
</dbReference>
<dbReference type="InterPro" id="IPR037509">
    <property type="entry name" value="ThiC"/>
</dbReference>
<dbReference type="InterPro" id="IPR025747">
    <property type="entry name" value="ThiC-associated_dom"/>
</dbReference>
<dbReference type="InterPro" id="IPR038521">
    <property type="entry name" value="ThiC/Bza_core_dom"/>
</dbReference>
<dbReference type="InterPro" id="IPR002817">
    <property type="entry name" value="ThiC/BzaA/B"/>
</dbReference>
<dbReference type="NCBIfam" id="NF006763">
    <property type="entry name" value="PRK09284.1"/>
    <property type="match status" value="1"/>
</dbReference>
<dbReference type="NCBIfam" id="NF009895">
    <property type="entry name" value="PRK13352.1"/>
    <property type="match status" value="1"/>
</dbReference>
<dbReference type="NCBIfam" id="TIGR00190">
    <property type="entry name" value="thiC"/>
    <property type="match status" value="1"/>
</dbReference>
<dbReference type="PANTHER" id="PTHR30557:SF1">
    <property type="entry name" value="PHOSPHOMETHYLPYRIMIDINE SYNTHASE, CHLOROPLASTIC"/>
    <property type="match status" value="1"/>
</dbReference>
<dbReference type="PANTHER" id="PTHR30557">
    <property type="entry name" value="THIAMINE BIOSYNTHESIS PROTEIN THIC"/>
    <property type="match status" value="1"/>
</dbReference>
<dbReference type="Pfam" id="PF13667">
    <property type="entry name" value="ThiC-associated"/>
    <property type="match status" value="1"/>
</dbReference>
<dbReference type="Pfam" id="PF01964">
    <property type="entry name" value="ThiC_Rad_SAM"/>
    <property type="match status" value="1"/>
</dbReference>
<dbReference type="SFLD" id="SFLDF00407">
    <property type="entry name" value="phosphomethylpyrimidine_syntha"/>
    <property type="match status" value="1"/>
</dbReference>
<dbReference type="SFLD" id="SFLDG01114">
    <property type="entry name" value="phosphomethylpyrimidine_syntha"/>
    <property type="match status" value="1"/>
</dbReference>
<dbReference type="SFLD" id="SFLDS00113">
    <property type="entry name" value="Radical_SAM_Phosphomethylpyrim"/>
    <property type="match status" value="1"/>
</dbReference>
<reference key="1">
    <citation type="journal article" date="2005" name="Nat. Biotechnol.">
        <title>Complete genome sequence of the acetic acid bacterium Gluconobacter oxydans.</title>
        <authorList>
            <person name="Prust C."/>
            <person name="Hoffmeister M."/>
            <person name="Liesegang H."/>
            <person name="Wiezer A."/>
            <person name="Fricke W.F."/>
            <person name="Ehrenreich A."/>
            <person name="Gottschalk G."/>
            <person name="Deppenmeier U."/>
        </authorList>
    </citation>
    <scope>NUCLEOTIDE SEQUENCE [LARGE SCALE GENOMIC DNA]</scope>
    <source>
        <strain>621H</strain>
    </source>
</reference>
<evidence type="ECO:0000255" key="1">
    <source>
        <dbReference type="HAMAP-Rule" id="MF_00089"/>
    </source>
</evidence>
<sequence>MNASIPAITTGPLPASSKVHVQGTLHDIKVPMRQIEISDECPLNVYDSSGPYTDTAISIDIAKGLADSRGIWLRSRGDVEEYDGRTITAVDNGFAEGERLTPAFPNQRRPLRAVGDRAVTQMAYARAGIITPEMEFVAIRENIGRTQALKEERDGEDFGASIPDFVTPEFVRQEIASGRAIIPANINHRELEPMIIGRNFLVKINANIGNSAVTSSMEEEVEKMVWSIRWGADTVMDLSTGRNIHNIRDWIIRNAPVPIGTVPLYQALEKVGGIAEDLTWEIFRDTLIEQAEQGVDYFTIHAGVRLHMIPLTARRVTGIVSRGGSIMAKWCLHHHRESFLYEHFEEICDICRRYDVSFSLGDGLRPGSIADANDAAQFAELETLGELTKIAWAKDCQVMIEGPGHVPMHKIKTNMDKQLEHCHEAPFYTLGPLTTDIAPGYDHITSAIGAAMIGWFGTAMLCYVTPKEHLGLPDRNDVKTGVITYKLAAHAADLAKGHPGAQMRDDALSRARFEFRWEDQFNLGLDPDTARAMHDETLPKQAHKVSHFCSMCGPKFCSMKISHDIRAAAEKQDGMEQMAEKFREGGQLYVPVTEPAE</sequence>
<feature type="chain" id="PRO_0000242267" description="Phosphomethylpyrimidine synthase">
    <location>
        <begin position="1"/>
        <end position="597"/>
    </location>
</feature>
<feature type="binding site" evidence="1">
    <location>
        <position position="207"/>
    </location>
    <ligand>
        <name>substrate</name>
    </ligand>
</feature>
<feature type="binding site" evidence="1">
    <location>
        <position position="236"/>
    </location>
    <ligand>
        <name>substrate</name>
    </ligand>
</feature>
<feature type="binding site" evidence="1">
    <location>
        <position position="265"/>
    </location>
    <ligand>
        <name>substrate</name>
    </ligand>
</feature>
<feature type="binding site" evidence="1">
    <location>
        <position position="301"/>
    </location>
    <ligand>
        <name>substrate</name>
    </ligand>
</feature>
<feature type="binding site" evidence="1">
    <location>
        <begin position="321"/>
        <end position="323"/>
    </location>
    <ligand>
        <name>substrate</name>
    </ligand>
</feature>
<feature type="binding site" evidence="1">
    <location>
        <begin position="362"/>
        <end position="365"/>
    </location>
    <ligand>
        <name>substrate</name>
    </ligand>
</feature>
<feature type="binding site" evidence="1">
    <location>
        <position position="401"/>
    </location>
    <ligand>
        <name>substrate</name>
    </ligand>
</feature>
<feature type="binding site" evidence="1">
    <location>
        <position position="405"/>
    </location>
    <ligand>
        <name>Zn(2+)</name>
        <dbReference type="ChEBI" id="CHEBI:29105"/>
    </ligand>
</feature>
<feature type="binding site" evidence="1">
    <location>
        <position position="428"/>
    </location>
    <ligand>
        <name>substrate</name>
    </ligand>
</feature>
<feature type="binding site" evidence="1">
    <location>
        <position position="469"/>
    </location>
    <ligand>
        <name>Zn(2+)</name>
        <dbReference type="ChEBI" id="CHEBI:29105"/>
    </ligand>
</feature>
<feature type="binding site" evidence="1">
    <location>
        <position position="549"/>
    </location>
    <ligand>
        <name>[4Fe-4S] cluster</name>
        <dbReference type="ChEBI" id="CHEBI:49883"/>
        <note>4Fe-4S-S-AdoMet</note>
    </ligand>
</feature>
<feature type="binding site" evidence="1">
    <location>
        <position position="552"/>
    </location>
    <ligand>
        <name>[4Fe-4S] cluster</name>
        <dbReference type="ChEBI" id="CHEBI:49883"/>
        <note>4Fe-4S-S-AdoMet</note>
    </ligand>
</feature>
<feature type="binding site" evidence="1">
    <location>
        <position position="557"/>
    </location>
    <ligand>
        <name>[4Fe-4S] cluster</name>
        <dbReference type="ChEBI" id="CHEBI:49883"/>
        <note>4Fe-4S-S-AdoMet</note>
    </ligand>
</feature>
<gene>
    <name evidence="1" type="primary">thiC</name>
    <name type="ordered locus">GOX2225</name>
</gene>